<keyword id="KW-0240">DNA-directed RNA polymerase</keyword>
<keyword id="KW-0460">Magnesium</keyword>
<keyword id="KW-0479">Metal-binding</keyword>
<keyword id="KW-0548">Nucleotidyltransferase</keyword>
<keyword id="KW-0804">Transcription</keyword>
<keyword id="KW-0808">Transferase</keyword>
<keyword id="KW-0862">Zinc</keyword>
<protein>
    <recommendedName>
        <fullName evidence="1">DNA-directed RNA polymerase subunit beta'</fullName>
        <shortName evidence="1">RNAP subunit beta'</shortName>
        <ecNumber evidence="1">2.7.7.6</ecNumber>
    </recommendedName>
    <alternativeName>
        <fullName evidence="1">RNA polymerase subunit beta'</fullName>
    </alternativeName>
    <alternativeName>
        <fullName evidence="1">Transcriptase subunit beta'</fullName>
    </alternativeName>
</protein>
<name>RPOC_THEP1</name>
<accession>A5IJW2</accession>
<feature type="chain" id="PRO_0000353450" description="DNA-directed RNA polymerase subunit beta'">
    <location>
        <begin position="1"/>
        <end position="1690"/>
    </location>
</feature>
<feature type="binding site" evidence="1">
    <location>
        <position position="63"/>
    </location>
    <ligand>
        <name>Zn(2+)</name>
        <dbReference type="ChEBI" id="CHEBI:29105"/>
        <label>1</label>
    </ligand>
</feature>
<feature type="binding site" evidence="1">
    <location>
        <position position="65"/>
    </location>
    <ligand>
        <name>Zn(2+)</name>
        <dbReference type="ChEBI" id="CHEBI:29105"/>
        <label>1</label>
    </ligand>
</feature>
<feature type="binding site" evidence="1">
    <location>
        <position position="78"/>
    </location>
    <ligand>
        <name>Zn(2+)</name>
        <dbReference type="ChEBI" id="CHEBI:29105"/>
        <label>1</label>
    </ligand>
</feature>
<feature type="binding site" evidence="1">
    <location>
        <position position="81"/>
    </location>
    <ligand>
        <name>Zn(2+)</name>
        <dbReference type="ChEBI" id="CHEBI:29105"/>
        <label>1</label>
    </ligand>
</feature>
<feature type="binding site" evidence="1">
    <location>
        <position position="753"/>
    </location>
    <ligand>
        <name>Mg(2+)</name>
        <dbReference type="ChEBI" id="CHEBI:18420"/>
    </ligand>
</feature>
<feature type="binding site" evidence="1">
    <location>
        <position position="755"/>
    </location>
    <ligand>
        <name>Mg(2+)</name>
        <dbReference type="ChEBI" id="CHEBI:18420"/>
    </ligand>
</feature>
<feature type="binding site" evidence="1">
    <location>
        <position position="757"/>
    </location>
    <ligand>
        <name>Mg(2+)</name>
        <dbReference type="ChEBI" id="CHEBI:18420"/>
    </ligand>
</feature>
<feature type="binding site" evidence="1">
    <location>
        <position position="1107"/>
    </location>
    <ligand>
        <name>Zn(2+)</name>
        <dbReference type="ChEBI" id="CHEBI:29105"/>
        <label>2</label>
    </ligand>
</feature>
<feature type="binding site" evidence="1">
    <location>
        <position position="1295"/>
    </location>
    <ligand>
        <name>Zn(2+)</name>
        <dbReference type="ChEBI" id="CHEBI:29105"/>
        <label>2</label>
    </ligand>
</feature>
<feature type="binding site" evidence="1">
    <location>
        <position position="1302"/>
    </location>
    <ligand>
        <name>Zn(2+)</name>
        <dbReference type="ChEBI" id="CHEBI:29105"/>
        <label>2</label>
    </ligand>
</feature>
<feature type="binding site" evidence="1">
    <location>
        <position position="1305"/>
    </location>
    <ligand>
        <name>Zn(2+)</name>
        <dbReference type="ChEBI" id="CHEBI:29105"/>
        <label>2</label>
    </ligand>
</feature>
<gene>
    <name evidence="1" type="primary">rpoC</name>
    <name type="ordered locus">Tpet_0461</name>
</gene>
<comment type="function">
    <text evidence="1">DNA-dependent RNA polymerase catalyzes the transcription of DNA into RNA using the four ribonucleoside triphosphates as substrates.</text>
</comment>
<comment type="catalytic activity">
    <reaction evidence="1">
        <text>RNA(n) + a ribonucleoside 5'-triphosphate = RNA(n+1) + diphosphate</text>
        <dbReference type="Rhea" id="RHEA:21248"/>
        <dbReference type="Rhea" id="RHEA-COMP:14527"/>
        <dbReference type="Rhea" id="RHEA-COMP:17342"/>
        <dbReference type="ChEBI" id="CHEBI:33019"/>
        <dbReference type="ChEBI" id="CHEBI:61557"/>
        <dbReference type="ChEBI" id="CHEBI:140395"/>
        <dbReference type="EC" id="2.7.7.6"/>
    </reaction>
</comment>
<comment type="cofactor">
    <cofactor evidence="1">
        <name>Mg(2+)</name>
        <dbReference type="ChEBI" id="CHEBI:18420"/>
    </cofactor>
    <text evidence="1">Binds 1 Mg(2+) ion per subunit.</text>
</comment>
<comment type="cofactor">
    <cofactor evidence="1">
        <name>Zn(2+)</name>
        <dbReference type="ChEBI" id="CHEBI:29105"/>
    </cofactor>
    <text evidence="1">Binds 2 Zn(2+) ions per subunit.</text>
</comment>
<comment type="subunit">
    <text evidence="1">The RNAP catalytic core consists of 2 alpha, 1 beta, 1 beta' and 1 omega subunit. When a sigma factor is associated with the core the holoenzyme is formed, which can initiate transcription.</text>
</comment>
<comment type="similarity">
    <text evidence="1">Belongs to the RNA polymerase beta' chain family.</text>
</comment>
<dbReference type="EC" id="2.7.7.6" evidence="1"/>
<dbReference type="EMBL" id="CP000702">
    <property type="protein sequence ID" value="ABQ46485.1"/>
    <property type="molecule type" value="Genomic_DNA"/>
</dbReference>
<dbReference type="RefSeq" id="WP_011943103.1">
    <property type="nucleotide sequence ID" value="NC_009486.1"/>
</dbReference>
<dbReference type="SMR" id="A5IJW2"/>
<dbReference type="STRING" id="390874.Tpet_0461"/>
<dbReference type="KEGG" id="tpt:Tpet_0461"/>
<dbReference type="eggNOG" id="COG0086">
    <property type="taxonomic scope" value="Bacteria"/>
</dbReference>
<dbReference type="HOGENOM" id="CLU_000524_3_1_0"/>
<dbReference type="Proteomes" id="UP000006558">
    <property type="component" value="Chromosome"/>
</dbReference>
<dbReference type="GO" id="GO:0000428">
    <property type="term" value="C:DNA-directed RNA polymerase complex"/>
    <property type="evidence" value="ECO:0007669"/>
    <property type="project" value="UniProtKB-KW"/>
</dbReference>
<dbReference type="GO" id="GO:0003677">
    <property type="term" value="F:DNA binding"/>
    <property type="evidence" value="ECO:0007669"/>
    <property type="project" value="UniProtKB-UniRule"/>
</dbReference>
<dbReference type="GO" id="GO:0003899">
    <property type="term" value="F:DNA-directed RNA polymerase activity"/>
    <property type="evidence" value="ECO:0007669"/>
    <property type="project" value="UniProtKB-UniRule"/>
</dbReference>
<dbReference type="GO" id="GO:0000287">
    <property type="term" value="F:magnesium ion binding"/>
    <property type="evidence" value="ECO:0007669"/>
    <property type="project" value="UniProtKB-UniRule"/>
</dbReference>
<dbReference type="GO" id="GO:0008270">
    <property type="term" value="F:zinc ion binding"/>
    <property type="evidence" value="ECO:0007669"/>
    <property type="project" value="UniProtKB-UniRule"/>
</dbReference>
<dbReference type="GO" id="GO:0006351">
    <property type="term" value="P:DNA-templated transcription"/>
    <property type="evidence" value="ECO:0007669"/>
    <property type="project" value="UniProtKB-UniRule"/>
</dbReference>
<dbReference type="CDD" id="cd02655">
    <property type="entry name" value="RNAP_beta'_C"/>
    <property type="match status" value="1"/>
</dbReference>
<dbReference type="CDD" id="cd01609">
    <property type="entry name" value="RNAP_beta'_N"/>
    <property type="match status" value="1"/>
</dbReference>
<dbReference type="Gene3D" id="1.10.132.30">
    <property type="match status" value="1"/>
</dbReference>
<dbReference type="Gene3D" id="1.10.150.390">
    <property type="match status" value="1"/>
</dbReference>
<dbReference type="Gene3D" id="1.10.1790.20">
    <property type="match status" value="1"/>
</dbReference>
<dbReference type="Gene3D" id="1.10.40.90">
    <property type="match status" value="1"/>
</dbReference>
<dbReference type="Gene3D" id="2.40.40.20">
    <property type="match status" value="1"/>
</dbReference>
<dbReference type="Gene3D" id="2.40.50.100">
    <property type="match status" value="4"/>
</dbReference>
<dbReference type="Gene3D" id="4.10.860.120">
    <property type="entry name" value="RNA polymerase II, clamp domain"/>
    <property type="match status" value="1"/>
</dbReference>
<dbReference type="Gene3D" id="1.10.274.100">
    <property type="entry name" value="RNA polymerase Rpb1, domain 3"/>
    <property type="match status" value="2"/>
</dbReference>
<dbReference type="HAMAP" id="MF_01322">
    <property type="entry name" value="RNApol_bact_RpoC"/>
    <property type="match status" value="1"/>
</dbReference>
<dbReference type="InterPro" id="IPR045867">
    <property type="entry name" value="DNA-dir_RpoC_beta_prime"/>
</dbReference>
<dbReference type="InterPro" id="IPR012754">
    <property type="entry name" value="DNA-dir_RpoC_beta_prime_bact"/>
</dbReference>
<dbReference type="InterPro" id="IPR000722">
    <property type="entry name" value="RNA_pol_asu"/>
</dbReference>
<dbReference type="InterPro" id="IPR006592">
    <property type="entry name" value="RNA_pol_N"/>
</dbReference>
<dbReference type="InterPro" id="IPR007080">
    <property type="entry name" value="RNA_pol_Rpb1_1"/>
</dbReference>
<dbReference type="InterPro" id="IPR007066">
    <property type="entry name" value="RNA_pol_Rpb1_3"/>
</dbReference>
<dbReference type="InterPro" id="IPR042102">
    <property type="entry name" value="RNA_pol_Rpb1_3_sf"/>
</dbReference>
<dbReference type="InterPro" id="IPR007083">
    <property type="entry name" value="RNA_pol_Rpb1_4"/>
</dbReference>
<dbReference type="InterPro" id="IPR007081">
    <property type="entry name" value="RNA_pol_Rpb1_5"/>
</dbReference>
<dbReference type="InterPro" id="IPR044893">
    <property type="entry name" value="RNA_pol_Rpb1_clamp_domain"/>
</dbReference>
<dbReference type="InterPro" id="IPR038120">
    <property type="entry name" value="Rpb1_funnel_sf"/>
</dbReference>
<dbReference type="PANTHER" id="PTHR19376">
    <property type="entry name" value="DNA-DIRECTED RNA POLYMERASE"/>
    <property type="match status" value="1"/>
</dbReference>
<dbReference type="PANTHER" id="PTHR19376:SF54">
    <property type="entry name" value="DNA-DIRECTED RNA POLYMERASE SUBUNIT BETA"/>
    <property type="match status" value="1"/>
</dbReference>
<dbReference type="Pfam" id="PF04997">
    <property type="entry name" value="RNA_pol_Rpb1_1"/>
    <property type="match status" value="2"/>
</dbReference>
<dbReference type="Pfam" id="PF00623">
    <property type="entry name" value="RNA_pol_Rpb1_2"/>
    <property type="match status" value="2"/>
</dbReference>
<dbReference type="Pfam" id="PF04983">
    <property type="entry name" value="RNA_pol_Rpb1_3"/>
    <property type="match status" value="1"/>
</dbReference>
<dbReference type="Pfam" id="PF05000">
    <property type="entry name" value="RNA_pol_Rpb1_4"/>
    <property type="match status" value="1"/>
</dbReference>
<dbReference type="Pfam" id="PF04998">
    <property type="entry name" value="RNA_pol_Rpb1_5"/>
    <property type="match status" value="1"/>
</dbReference>
<dbReference type="SMART" id="SM00663">
    <property type="entry name" value="RPOLA_N"/>
    <property type="match status" value="1"/>
</dbReference>
<dbReference type="SUPFAM" id="SSF64484">
    <property type="entry name" value="beta and beta-prime subunits of DNA dependent RNA-polymerase"/>
    <property type="match status" value="1"/>
</dbReference>
<proteinExistence type="inferred from homology"/>
<reference key="1">
    <citation type="submission" date="2007-05" db="EMBL/GenBank/DDBJ databases">
        <title>Complete sequence of Thermotoga petrophila RKU-1.</title>
        <authorList>
            <consortium name="US DOE Joint Genome Institute"/>
            <person name="Copeland A."/>
            <person name="Lucas S."/>
            <person name="Lapidus A."/>
            <person name="Barry K."/>
            <person name="Glavina del Rio T."/>
            <person name="Dalin E."/>
            <person name="Tice H."/>
            <person name="Pitluck S."/>
            <person name="Sims D."/>
            <person name="Brettin T."/>
            <person name="Bruce D."/>
            <person name="Detter J.C."/>
            <person name="Han C."/>
            <person name="Tapia R."/>
            <person name="Schmutz J."/>
            <person name="Larimer F."/>
            <person name="Land M."/>
            <person name="Hauser L."/>
            <person name="Kyrpides N."/>
            <person name="Mikhailova N."/>
            <person name="Nelson K."/>
            <person name="Gogarten J.P."/>
            <person name="Noll K."/>
            <person name="Richardson P."/>
        </authorList>
    </citation>
    <scope>NUCLEOTIDE SEQUENCE [LARGE SCALE GENOMIC DNA]</scope>
    <source>
        <strain>ATCC BAA-488 / DSM 13995 / JCM 10881 / RKU-1</strain>
    </source>
</reference>
<sequence length="1690" mass="190694">MPMSSFKRKIKAIQIKIASPEVIRSWSGGEVKKPETINYRTFKPERDGLFCERIFGPVKDYECACGKYKGKKYEGTVCERCGVRVESREARRKRMGHIELAAPAVHIWYLESIPSVLGTLLNMSTSDLENIIYYGSRRVIERAFIVTDPKDTPFSQGDVIYETEYRIYRKKWDFEVEQAFVVKNPKSPVLSDIDGEVTLKTEKSITGREITWIIVKNITRATHTVLPGMILVVKDGQEVEKGQDLTKEMTIDPVYAPFDGHVEIDELSNTITLKPLTTSKDQPVVFTAPYGAKILVSNGQKVKKGDQITTSTSLPSVKSSISGTVRFGSNLNIRALEDGNFEVLSTGEVYVEQVIEERKYPVFEGALVYVNNGDQVKKGDHLADRFLFEEEYLSATEYKIFESHYPTMFDVEERTENDRPIVVITDIDPEVSKETGLKVGDIVTENEYEAYLQIYPEKIVADAGAQAIKKLLQNLDLEALQAEIEAELKKLPSSSSKAIKLRRRLKMVKDFLKSGNKPEWMVLEVVPVIPPDLRPMIQIEGGRFATTDLNELYRRLINRNNRLKKLLELGAPEIILRNEKRMLQEAVDALIHNGSDSEGKRSRRAVLKDRNGRPLKSLTDLLKGKKGRFRRNLLGKRVDYSGRAVIVVGPHLKIHQCGIPKKMAMELFKPFVLAKLLGEGSSSKTMRKVKKAIIEKEMPEAWEVLEEVIKGSVVLLNRAPTLHRMSIQAFEPKLVEGNAIQLHPVVCPPFNADFDGDQMAVHVPLSAAAQAEARFLMLSRYNIISPAHGKPISLPTQDIIIGSYYLTTVSKEFDSLKEEDVKWKFSSPEEAMLAYHLGFIKLHTPILIKVVINGEEKRIKTTLGRVIFNSILPEDLRDYNRIFDKKQINTLVYETFKRHGIDRAADLLDDIKDIGFHYATVSGLTLSLKDLKIPPERDEILRKTWEKVRIIEENYEKGFLTEEQRKSEIIRLWMSVTEEITKLTSRTLAEDPFNPIYMMVNSGARGNIDQVKQLAGIRGLMIKAYDPRSREIKSKIFKGQAIHEALTFDYPVDKNLREGVDILQFFISTYGARKGQVDTAMNTSFAGYLTRRLVDVAQSVTVAEPDCGTHEGIRAMDLIKEGTVVEKMNEFLFGRVLAKDVLDPETKEVLKNPETGKEYTRNTMLTDDDANFLASYKKMVDVVRYEEIDITELSLPNMYAEIAEPVGEYEEGTELTWDVVKAAKNEGKYRIKVKVYPVVGTVYAEEEPLYDKKGERQLLVYQEVINEIVAKMLEENGIEKVPVRPDIIVRSPLTCESEYGVCAACYGMDLSNHKIVNVGESVGIVAAQSIGEPGTQLTMRTFHVGGVMGASDIVSGLTTVEKTFEPYAFLREEKSGGKKEIRKYYGSESILCEVDGFVKDIATDESGRTVIYVEDYAGNIHAYKVPKRAKVRVEKGQKVLRGETLTSGAIVWWKLLELESEKGVMTAMNLLKIIKNAYVQQGVSIHDKHFEIIFKQMLSMATIVDPGDSDYLPDQLVPLVDIKRFNREILEGNAKVEENRKWVIGKTLAKRIIAETEEGELVELAQKGDEVTEELLKKIIEAGIKEIDVFEKDKVVTYQILPKEPIKYKRRLLSLKKAALNYPGWLSAAAFEETAWVLTAAAIEGKVDPLIGLKENVIVGQLIPSGTGLDVFAGIQVEETPRAAVEEELA</sequence>
<evidence type="ECO:0000255" key="1">
    <source>
        <dbReference type="HAMAP-Rule" id="MF_01322"/>
    </source>
</evidence>
<organism>
    <name type="scientific">Thermotoga petrophila (strain ATCC BAA-488 / DSM 13995 / JCM 10881 / RKU-1)</name>
    <dbReference type="NCBI Taxonomy" id="390874"/>
    <lineage>
        <taxon>Bacteria</taxon>
        <taxon>Thermotogati</taxon>
        <taxon>Thermotogota</taxon>
        <taxon>Thermotogae</taxon>
        <taxon>Thermotogales</taxon>
        <taxon>Thermotogaceae</taxon>
        <taxon>Thermotoga</taxon>
    </lineage>
</organism>